<comment type="function">
    <text evidence="1">Involved in the modulation of the specificity of the ClpAP-mediated ATP-dependent protein degradation.</text>
</comment>
<comment type="subunit">
    <text evidence="1">Binds to the N-terminal domain of the chaperone ClpA.</text>
</comment>
<comment type="similarity">
    <text evidence="1">Belongs to the ClpS family.</text>
</comment>
<gene>
    <name evidence="1" type="primary">clpS</name>
    <name type="ordered locus">ECUMN_1076</name>
</gene>
<accession>B7NAN2</accession>
<organism>
    <name type="scientific">Escherichia coli O17:K52:H18 (strain UMN026 / ExPEC)</name>
    <dbReference type="NCBI Taxonomy" id="585056"/>
    <lineage>
        <taxon>Bacteria</taxon>
        <taxon>Pseudomonadati</taxon>
        <taxon>Pseudomonadota</taxon>
        <taxon>Gammaproteobacteria</taxon>
        <taxon>Enterobacterales</taxon>
        <taxon>Enterobacteriaceae</taxon>
        <taxon>Escherichia</taxon>
    </lineage>
</organism>
<evidence type="ECO:0000255" key="1">
    <source>
        <dbReference type="HAMAP-Rule" id="MF_00302"/>
    </source>
</evidence>
<dbReference type="EMBL" id="CU928163">
    <property type="protein sequence ID" value="CAR12285.1"/>
    <property type="molecule type" value="Genomic_DNA"/>
</dbReference>
<dbReference type="RefSeq" id="WP_000520781.1">
    <property type="nucleotide sequence ID" value="NC_011751.1"/>
</dbReference>
<dbReference type="RefSeq" id="YP_002411829.1">
    <property type="nucleotide sequence ID" value="NC_011751.1"/>
</dbReference>
<dbReference type="SMR" id="B7NAN2"/>
<dbReference type="STRING" id="585056.ECUMN_1076"/>
<dbReference type="GeneID" id="86863397"/>
<dbReference type="KEGG" id="eum:ECUMN_1076"/>
<dbReference type="PATRIC" id="fig|585056.7.peg.1269"/>
<dbReference type="HOGENOM" id="CLU_134358_2_1_6"/>
<dbReference type="Proteomes" id="UP000007097">
    <property type="component" value="Chromosome"/>
</dbReference>
<dbReference type="GO" id="GO:0030163">
    <property type="term" value="P:protein catabolic process"/>
    <property type="evidence" value="ECO:0007669"/>
    <property type="project" value="InterPro"/>
</dbReference>
<dbReference type="GO" id="GO:0006508">
    <property type="term" value="P:proteolysis"/>
    <property type="evidence" value="ECO:0007669"/>
    <property type="project" value="UniProtKB-UniRule"/>
</dbReference>
<dbReference type="FunFam" id="3.30.1390.10:FF:000002">
    <property type="entry name" value="ATP-dependent Clp protease adapter protein ClpS"/>
    <property type="match status" value="1"/>
</dbReference>
<dbReference type="Gene3D" id="3.30.1390.10">
    <property type="match status" value="1"/>
</dbReference>
<dbReference type="HAMAP" id="MF_00302">
    <property type="entry name" value="ClpS"/>
    <property type="match status" value="1"/>
</dbReference>
<dbReference type="InterPro" id="IPR022935">
    <property type="entry name" value="ClpS"/>
</dbReference>
<dbReference type="InterPro" id="IPR003769">
    <property type="entry name" value="ClpS_core"/>
</dbReference>
<dbReference type="InterPro" id="IPR014719">
    <property type="entry name" value="Ribosomal_bL12_C/ClpS-like"/>
</dbReference>
<dbReference type="NCBIfam" id="NF000670">
    <property type="entry name" value="PRK00033.1-3"/>
    <property type="match status" value="1"/>
</dbReference>
<dbReference type="NCBIfam" id="NF000672">
    <property type="entry name" value="PRK00033.1-5"/>
    <property type="match status" value="1"/>
</dbReference>
<dbReference type="PANTHER" id="PTHR33473:SF19">
    <property type="entry name" value="ATP-DEPENDENT CLP PROTEASE ADAPTER PROTEIN CLPS"/>
    <property type="match status" value="1"/>
</dbReference>
<dbReference type="PANTHER" id="PTHR33473">
    <property type="entry name" value="ATP-DEPENDENT CLP PROTEASE ADAPTER PROTEIN CLPS1, CHLOROPLASTIC"/>
    <property type="match status" value="1"/>
</dbReference>
<dbReference type="Pfam" id="PF02617">
    <property type="entry name" value="ClpS"/>
    <property type="match status" value="1"/>
</dbReference>
<dbReference type="SUPFAM" id="SSF54736">
    <property type="entry name" value="ClpS-like"/>
    <property type="match status" value="1"/>
</dbReference>
<protein>
    <recommendedName>
        <fullName evidence="1">ATP-dependent Clp protease adapter protein ClpS</fullName>
    </recommendedName>
</protein>
<feature type="chain" id="PRO_1000119501" description="ATP-dependent Clp protease adapter protein ClpS">
    <location>
        <begin position="1"/>
        <end position="106"/>
    </location>
</feature>
<name>CLPS_ECOLU</name>
<proteinExistence type="inferred from homology"/>
<sequence length="106" mass="12179">MGKTNDWLDFDQLAEEKVRDALKPPSMYKVILVNDDYTPMEFVIDVLQKFFSYDVERATQLMLAVHYQGKAICGVFTAEVAETKVAMVNKYARENEHPLLCTLEKA</sequence>
<reference key="1">
    <citation type="journal article" date="2009" name="PLoS Genet.">
        <title>Organised genome dynamics in the Escherichia coli species results in highly diverse adaptive paths.</title>
        <authorList>
            <person name="Touchon M."/>
            <person name="Hoede C."/>
            <person name="Tenaillon O."/>
            <person name="Barbe V."/>
            <person name="Baeriswyl S."/>
            <person name="Bidet P."/>
            <person name="Bingen E."/>
            <person name="Bonacorsi S."/>
            <person name="Bouchier C."/>
            <person name="Bouvet O."/>
            <person name="Calteau A."/>
            <person name="Chiapello H."/>
            <person name="Clermont O."/>
            <person name="Cruveiller S."/>
            <person name="Danchin A."/>
            <person name="Diard M."/>
            <person name="Dossat C."/>
            <person name="Karoui M.E."/>
            <person name="Frapy E."/>
            <person name="Garry L."/>
            <person name="Ghigo J.M."/>
            <person name="Gilles A.M."/>
            <person name="Johnson J."/>
            <person name="Le Bouguenec C."/>
            <person name="Lescat M."/>
            <person name="Mangenot S."/>
            <person name="Martinez-Jehanne V."/>
            <person name="Matic I."/>
            <person name="Nassif X."/>
            <person name="Oztas S."/>
            <person name="Petit M.A."/>
            <person name="Pichon C."/>
            <person name="Rouy Z."/>
            <person name="Ruf C.S."/>
            <person name="Schneider D."/>
            <person name="Tourret J."/>
            <person name="Vacherie B."/>
            <person name="Vallenet D."/>
            <person name="Medigue C."/>
            <person name="Rocha E.P.C."/>
            <person name="Denamur E."/>
        </authorList>
    </citation>
    <scope>NUCLEOTIDE SEQUENCE [LARGE SCALE GENOMIC DNA]</scope>
    <source>
        <strain>UMN026 / ExPEC</strain>
    </source>
</reference>